<evidence type="ECO:0000255" key="1">
    <source>
        <dbReference type="HAMAP-Rule" id="MF_01390"/>
    </source>
</evidence>
<proteinExistence type="inferred from homology"/>
<comment type="function">
    <text evidence="1">Usually encoded in the trnK tRNA gene intron. Probably assists in splicing its own and other chloroplast group II introns.</text>
</comment>
<comment type="subcellular location">
    <subcellularLocation>
        <location>Plastid</location>
        <location>Chloroplast</location>
    </subcellularLocation>
</comment>
<comment type="similarity">
    <text evidence="1">Belongs to the intron maturase 2 family. MatK subfamily.</text>
</comment>
<geneLocation type="chloroplast"/>
<sequence length="506" mass="60254">MEEFQGYLELDRYQQHDFLYPLIFREYIYALAHDHGLNRSILLDNVGYDTKYSLLIIKRLISRMYQQNHLIISANDSNQNQFFGYNKNLYSQMMSEGFAVIVEIPFSLRLVSSLEATEIVKSYNLRSIHSIFPFLEDKFPHLNYVSDVLIPYPIHLEILVQTLRYWVKDPSSLHLLRFFLHEYYNWNSLITPKKIIFSKSNPRLFLLLYNSHVCEYESILLFLRNQSSHLRLTSSGIFFERIHFYEKKKYPVPVEKVFVNDFPAAILWFFKDPFMHYVRYQGKSILSSKDTPLLMNKWKYYLVNLWQCHSYVWSQPGRIYINQLSKHSLDFLGYFSSMRPNLSVVRGQMLENSFIMDNAMKKLDTLVPIIPLIGSLAKVKFCNALGHPISKSTWADSSDFDIIDRFVHICRNLSHYYSGSSRKKSLYRIKYILRLSCVKTLARKHKSTVRTFLKRLGYKLLDEFFTEEEQILSLIFPRASYTLKKFYRGRIWYLDIFCINDLVNHE</sequence>
<organism>
    <name type="scientific">Crataegus monogyna</name>
    <name type="common">Hawthorn</name>
    <name type="synonym">Crataegus apiifolia</name>
    <dbReference type="NCBI Taxonomy" id="140997"/>
    <lineage>
        <taxon>Eukaryota</taxon>
        <taxon>Viridiplantae</taxon>
        <taxon>Streptophyta</taxon>
        <taxon>Embryophyta</taxon>
        <taxon>Tracheophyta</taxon>
        <taxon>Spermatophyta</taxon>
        <taxon>Magnoliopsida</taxon>
        <taxon>eudicotyledons</taxon>
        <taxon>Gunneridae</taxon>
        <taxon>Pentapetalae</taxon>
        <taxon>rosids</taxon>
        <taxon>fabids</taxon>
        <taxon>Rosales</taxon>
        <taxon>Rosaceae</taxon>
        <taxon>Amygdaloideae</taxon>
        <taxon>Maleae</taxon>
        <taxon>Crataegus</taxon>
    </lineage>
</organism>
<dbReference type="EMBL" id="AF288099">
    <property type="protein sequence ID" value="AAL35993.1"/>
    <property type="molecule type" value="Genomic_DNA"/>
</dbReference>
<dbReference type="GO" id="GO:0009507">
    <property type="term" value="C:chloroplast"/>
    <property type="evidence" value="ECO:0007669"/>
    <property type="project" value="UniProtKB-SubCell"/>
</dbReference>
<dbReference type="GO" id="GO:0003723">
    <property type="term" value="F:RNA binding"/>
    <property type="evidence" value="ECO:0007669"/>
    <property type="project" value="UniProtKB-KW"/>
</dbReference>
<dbReference type="GO" id="GO:0006397">
    <property type="term" value="P:mRNA processing"/>
    <property type="evidence" value="ECO:0007669"/>
    <property type="project" value="UniProtKB-KW"/>
</dbReference>
<dbReference type="GO" id="GO:0008380">
    <property type="term" value="P:RNA splicing"/>
    <property type="evidence" value="ECO:0007669"/>
    <property type="project" value="UniProtKB-UniRule"/>
</dbReference>
<dbReference type="GO" id="GO:0008033">
    <property type="term" value="P:tRNA processing"/>
    <property type="evidence" value="ECO:0007669"/>
    <property type="project" value="UniProtKB-KW"/>
</dbReference>
<dbReference type="HAMAP" id="MF_01390">
    <property type="entry name" value="MatK"/>
    <property type="match status" value="1"/>
</dbReference>
<dbReference type="InterPro" id="IPR024937">
    <property type="entry name" value="Domain_X"/>
</dbReference>
<dbReference type="InterPro" id="IPR002866">
    <property type="entry name" value="Maturase_MatK"/>
</dbReference>
<dbReference type="InterPro" id="IPR024942">
    <property type="entry name" value="Maturase_MatK_N"/>
</dbReference>
<dbReference type="PANTHER" id="PTHR34811">
    <property type="entry name" value="MATURASE K"/>
    <property type="match status" value="1"/>
</dbReference>
<dbReference type="PANTHER" id="PTHR34811:SF1">
    <property type="entry name" value="MATURASE K"/>
    <property type="match status" value="1"/>
</dbReference>
<dbReference type="Pfam" id="PF01348">
    <property type="entry name" value="Intron_maturas2"/>
    <property type="match status" value="1"/>
</dbReference>
<dbReference type="Pfam" id="PF01824">
    <property type="entry name" value="MatK_N"/>
    <property type="match status" value="1"/>
</dbReference>
<accession>Q8WJQ9</accession>
<protein>
    <recommendedName>
        <fullName evidence="1">Maturase K</fullName>
    </recommendedName>
    <alternativeName>
        <fullName evidence="1">Intron maturase</fullName>
    </alternativeName>
</protein>
<gene>
    <name evidence="1" type="primary">matK</name>
</gene>
<reference key="1">
    <citation type="journal article" date="2002" name="Plant Syst. Evol.">
        <title>Phylogenetic relationships in Rosaceae inferred from chloroplast matK and trnL-trnF nucleotide sequence data.</title>
        <authorList>
            <person name="Potter D."/>
            <person name="Gao F."/>
            <person name="Bortiri P.E."/>
            <person name="Oh S.-H."/>
            <person name="Baggett S."/>
        </authorList>
    </citation>
    <scope>NUCLEOTIDE SEQUENCE [GENOMIC DNA]</scope>
</reference>
<name>MATK_CRAMN</name>
<feature type="chain" id="PRO_0000143343" description="Maturase K">
    <location>
        <begin position="1"/>
        <end position="506"/>
    </location>
</feature>
<keyword id="KW-0150">Chloroplast</keyword>
<keyword id="KW-0507">mRNA processing</keyword>
<keyword id="KW-0934">Plastid</keyword>
<keyword id="KW-0694">RNA-binding</keyword>
<keyword id="KW-0819">tRNA processing</keyword>